<protein>
    <recommendedName>
        <fullName>Probable actin-related protein 2/3 complex subunit 2</fullName>
    </recommendedName>
    <alternativeName>
        <fullName>Arp2/3 complex 34 kDa subunit</fullName>
        <shortName>p34-ARC</shortName>
    </alternativeName>
</protein>
<accession>Q7PVX8</accession>
<accession>Q7PVX9</accession>
<organism>
    <name type="scientific">Anopheles gambiae</name>
    <name type="common">African malaria mosquito</name>
    <dbReference type="NCBI Taxonomy" id="7165"/>
    <lineage>
        <taxon>Eukaryota</taxon>
        <taxon>Metazoa</taxon>
        <taxon>Ecdysozoa</taxon>
        <taxon>Arthropoda</taxon>
        <taxon>Hexapoda</taxon>
        <taxon>Insecta</taxon>
        <taxon>Pterygota</taxon>
        <taxon>Neoptera</taxon>
        <taxon>Endopterygota</taxon>
        <taxon>Diptera</taxon>
        <taxon>Nematocera</taxon>
        <taxon>Culicoidea</taxon>
        <taxon>Culicidae</taxon>
        <taxon>Anophelinae</taxon>
        <taxon>Anopheles</taxon>
    </lineage>
</organism>
<keyword id="KW-0009">Actin-binding</keyword>
<keyword id="KW-0963">Cytoplasm</keyword>
<keyword id="KW-0206">Cytoskeleton</keyword>
<keyword id="KW-1185">Reference proteome</keyword>
<gene>
    <name type="primary">Arc-p34</name>
    <name type="ORF">AGAP009154</name>
</gene>
<comment type="function">
    <text evidence="1">Functions as actin-binding component of the Arp2/3 complex which is involved in regulation of actin polymerization and together with an activating nucleation-promoting factor (NPF) mediates the formation of branched actin networks. Seems to contact the mother actin filament (By similarity).</text>
</comment>
<comment type="subunit">
    <text evidence="1">Component of the Arp2/3 complex.</text>
</comment>
<comment type="subcellular location">
    <subcellularLocation>
        <location evidence="1">Cytoplasm</location>
        <location evidence="1">Cytoskeleton</location>
    </subcellularLocation>
</comment>
<comment type="similarity">
    <text evidence="2">Belongs to the ARPC2 family.</text>
</comment>
<dbReference type="EMBL" id="AAAB01008984">
    <property type="protein sequence ID" value="EAA14760.3"/>
    <property type="molecule type" value="Genomic_DNA"/>
</dbReference>
<dbReference type="SMR" id="Q7PVX8"/>
<dbReference type="FunCoup" id="Q7PVX8">
    <property type="interactions" value="1724"/>
</dbReference>
<dbReference type="STRING" id="7165.Q7PVX8"/>
<dbReference type="PaxDb" id="7165-AGAP009154-PA"/>
<dbReference type="EnsemblMetazoa" id="AGAP009154-RA">
    <property type="protein sequence ID" value="AGAP009154-PA"/>
    <property type="gene ID" value="AGAP009154"/>
</dbReference>
<dbReference type="GeneID" id="1280110"/>
<dbReference type="KEGG" id="aga:1280110"/>
<dbReference type="CTD" id="10109"/>
<dbReference type="VEuPathDB" id="VectorBase:AGAMI1_013711"/>
<dbReference type="VEuPathDB" id="VectorBase:AGAP009154"/>
<dbReference type="eggNOG" id="KOG2826">
    <property type="taxonomic scope" value="Eukaryota"/>
</dbReference>
<dbReference type="HOGENOM" id="CLU_059439_2_0_1"/>
<dbReference type="InParanoid" id="Q7PVX8"/>
<dbReference type="OMA" id="FRSYFHY"/>
<dbReference type="PhylomeDB" id="Q7PVX8"/>
<dbReference type="Proteomes" id="UP000007062">
    <property type="component" value="Chromosome 3R"/>
</dbReference>
<dbReference type="GO" id="GO:0005885">
    <property type="term" value="C:Arp2/3 protein complex"/>
    <property type="evidence" value="ECO:0000318"/>
    <property type="project" value="GO_Central"/>
</dbReference>
<dbReference type="GO" id="GO:0005737">
    <property type="term" value="C:cytoplasm"/>
    <property type="evidence" value="ECO:0007669"/>
    <property type="project" value="UniProtKB-KW"/>
</dbReference>
<dbReference type="GO" id="GO:0051015">
    <property type="term" value="F:actin filament binding"/>
    <property type="evidence" value="ECO:0000318"/>
    <property type="project" value="GO_Central"/>
</dbReference>
<dbReference type="GO" id="GO:0005200">
    <property type="term" value="F:structural constituent of cytoskeleton"/>
    <property type="evidence" value="ECO:0000318"/>
    <property type="project" value="GO_Central"/>
</dbReference>
<dbReference type="GO" id="GO:0030041">
    <property type="term" value="P:actin filament polymerization"/>
    <property type="evidence" value="ECO:0007669"/>
    <property type="project" value="InterPro"/>
</dbReference>
<dbReference type="GO" id="GO:0034314">
    <property type="term" value="P:Arp2/3 complex-mediated actin nucleation"/>
    <property type="evidence" value="ECO:0000318"/>
    <property type="project" value="GO_Central"/>
</dbReference>
<dbReference type="FunFam" id="3.30.1460.20:FF:000002">
    <property type="entry name" value="Arp2/3 complex 34 kDa subunit"/>
    <property type="match status" value="1"/>
</dbReference>
<dbReference type="FunFam" id="3.30.1460.20:FF:000004">
    <property type="entry name" value="Arp2/3 complex 34 kDa subunit"/>
    <property type="match status" value="1"/>
</dbReference>
<dbReference type="Gene3D" id="3.30.1460.20">
    <property type="match status" value="2"/>
</dbReference>
<dbReference type="InterPro" id="IPR007188">
    <property type="entry name" value="ARPC2"/>
</dbReference>
<dbReference type="InterPro" id="IPR034666">
    <property type="entry name" value="ARPC2/4"/>
</dbReference>
<dbReference type="PANTHER" id="PTHR12058:SF0">
    <property type="entry name" value="ACTIN-RELATED PROTEIN 2_3 COMPLEX SUBUNIT 2"/>
    <property type="match status" value="1"/>
</dbReference>
<dbReference type="PANTHER" id="PTHR12058">
    <property type="entry name" value="ARP2/3 COMPLEX 34 KDA SUBUNIT"/>
    <property type="match status" value="1"/>
</dbReference>
<dbReference type="Pfam" id="PF04045">
    <property type="entry name" value="P34-Arc"/>
    <property type="match status" value="1"/>
</dbReference>
<dbReference type="SUPFAM" id="SSF69645">
    <property type="entry name" value="Arp2/3 complex subunits"/>
    <property type="match status" value="2"/>
</dbReference>
<sequence length="304" mass="35075">MILLEINNRIVEETLTVKFKNAIAGNKAESIDVTVADFDGVLFHISNINGDKTKVRTSISLKFYKQLQEHGADELLKREYGDLLVAPEDGYNVSVLVDLENIPENWEETVRKIGLLKRNCFASVFEKYFDFQSQGEGEGEGQKRAVINYRNDETMYVEAKPDRVTVVFSTIFRDEDDVVLGKVFMQELREGRRASHTAPQVLFSHREPPLELANTGARVGENIGYVTFVLFPRHTAKETRDNTINLIHMFRDYLHYHIKCSKAYIHSRMRAKTTEFLKVLNRARPEPKITEKKTITGRTFIRKE</sequence>
<feature type="chain" id="PRO_0000124038" description="Probable actin-related protein 2/3 complex subunit 2">
    <location>
        <begin position="1"/>
        <end position="304"/>
    </location>
</feature>
<name>ARPC2_ANOGA</name>
<evidence type="ECO:0000250" key="1"/>
<evidence type="ECO:0000305" key="2"/>
<proteinExistence type="inferred from homology"/>
<reference key="1">
    <citation type="journal article" date="2002" name="Science">
        <title>The genome sequence of the malaria mosquito Anopheles gambiae.</title>
        <authorList>
            <person name="Holt R.A."/>
            <person name="Subramanian G.M."/>
            <person name="Halpern A."/>
            <person name="Sutton G.G."/>
            <person name="Charlab R."/>
            <person name="Nusskern D.R."/>
            <person name="Wincker P."/>
            <person name="Clark A.G."/>
            <person name="Ribeiro J.M.C."/>
            <person name="Wides R."/>
            <person name="Salzberg S.L."/>
            <person name="Loftus B.J."/>
            <person name="Yandell M.D."/>
            <person name="Majoros W.H."/>
            <person name="Rusch D.B."/>
            <person name="Lai Z."/>
            <person name="Kraft C.L."/>
            <person name="Abril J.F."/>
            <person name="Anthouard V."/>
            <person name="Arensburger P."/>
            <person name="Atkinson P.W."/>
            <person name="Baden H."/>
            <person name="de Berardinis V."/>
            <person name="Baldwin D."/>
            <person name="Benes V."/>
            <person name="Biedler J."/>
            <person name="Blass C."/>
            <person name="Bolanos R."/>
            <person name="Boscus D."/>
            <person name="Barnstead M."/>
            <person name="Cai S."/>
            <person name="Center A."/>
            <person name="Chaturverdi K."/>
            <person name="Christophides G.K."/>
            <person name="Chrystal M.A.M."/>
            <person name="Clamp M."/>
            <person name="Cravchik A."/>
            <person name="Curwen V."/>
            <person name="Dana A."/>
            <person name="Delcher A."/>
            <person name="Dew I."/>
            <person name="Evans C.A."/>
            <person name="Flanigan M."/>
            <person name="Grundschober-Freimoser A."/>
            <person name="Friedli L."/>
            <person name="Gu Z."/>
            <person name="Guan P."/>
            <person name="Guigo R."/>
            <person name="Hillenmeyer M.E."/>
            <person name="Hladun S.L."/>
            <person name="Hogan J.R."/>
            <person name="Hong Y.S."/>
            <person name="Hoover J."/>
            <person name="Jaillon O."/>
            <person name="Ke Z."/>
            <person name="Kodira C.D."/>
            <person name="Kokoza E."/>
            <person name="Koutsos A."/>
            <person name="Letunic I."/>
            <person name="Levitsky A.A."/>
            <person name="Liang Y."/>
            <person name="Lin J.-J."/>
            <person name="Lobo N.F."/>
            <person name="Lopez J.R."/>
            <person name="Malek J.A."/>
            <person name="McIntosh T.C."/>
            <person name="Meister S."/>
            <person name="Miller J.R."/>
            <person name="Mobarry C."/>
            <person name="Mongin E."/>
            <person name="Murphy S.D."/>
            <person name="O'Brochta D.A."/>
            <person name="Pfannkoch C."/>
            <person name="Qi R."/>
            <person name="Regier M.A."/>
            <person name="Remington K."/>
            <person name="Shao H."/>
            <person name="Sharakhova M.V."/>
            <person name="Sitter C.D."/>
            <person name="Shetty J."/>
            <person name="Smith T.J."/>
            <person name="Strong R."/>
            <person name="Sun J."/>
            <person name="Thomasova D."/>
            <person name="Ton L.Q."/>
            <person name="Topalis P."/>
            <person name="Tu Z.J."/>
            <person name="Unger M.F."/>
            <person name="Walenz B."/>
            <person name="Wang A.H."/>
            <person name="Wang J."/>
            <person name="Wang M."/>
            <person name="Wang X."/>
            <person name="Woodford K.J."/>
            <person name="Wortman J.R."/>
            <person name="Wu M."/>
            <person name="Yao A."/>
            <person name="Zdobnov E.M."/>
            <person name="Zhang H."/>
            <person name="Zhao Q."/>
            <person name="Zhao S."/>
            <person name="Zhu S.C."/>
            <person name="Zhimulev I."/>
            <person name="Coluzzi M."/>
            <person name="della Torre A."/>
            <person name="Roth C.W."/>
            <person name="Louis C."/>
            <person name="Kalush F."/>
            <person name="Mural R.J."/>
            <person name="Myers E.W."/>
            <person name="Adams M.D."/>
            <person name="Smith H.O."/>
            <person name="Broder S."/>
            <person name="Gardner M.J."/>
            <person name="Fraser C.M."/>
            <person name="Birney E."/>
            <person name="Bork P."/>
            <person name="Brey P.T."/>
            <person name="Venter J.C."/>
            <person name="Weissenbach J."/>
            <person name="Kafatos F.C."/>
            <person name="Collins F.H."/>
            <person name="Hoffman S.L."/>
        </authorList>
    </citation>
    <scope>NUCLEOTIDE SEQUENCE [LARGE SCALE GENOMIC DNA]</scope>
    <source>
        <strain>PEST</strain>
    </source>
</reference>